<feature type="chain" id="PRO_1000085534" description="Protein-methionine-sulfoxide reductase heme-binding subunit MsrQ">
    <location>
        <begin position="1"/>
        <end position="199"/>
    </location>
</feature>
<feature type="transmembrane region" description="Helical" evidence="1">
    <location>
        <begin position="10"/>
        <end position="30"/>
    </location>
</feature>
<feature type="transmembrane region" description="Helical" evidence="1">
    <location>
        <begin position="82"/>
        <end position="102"/>
    </location>
</feature>
<feature type="transmembrane region" description="Helical" evidence="1">
    <location>
        <begin position="116"/>
        <end position="136"/>
    </location>
</feature>
<feature type="transmembrane region" description="Helical" evidence="1">
    <location>
        <begin position="153"/>
        <end position="173"/>
    </location>
</feature>
<gene>
    <name evidence="1" type="primary">msrQ</name>
    <name type="ordered locus">SPAB_04207</name>
</gene>
<keyword id="KW-0997">Cell inner membrane</keyword>
<keyword id="KW-1003">Cell membrane</keyword>
<keyword id="KW-0249">Electron transport</keyword>
<keyword id="KW-0285">Flavoprotein</keyword>
<keyword id="KW-0288">FMN</keyword>
<keyword id="KW-0349">Heme</keyword>
<keyword id="KW-0408">Iron</keyword>
<keyword id="KW-0472">Membrane</keyword>
<keyword id="KW-0479">Metal-binding</keyword>
<keyword id="KW-0812">Transmembrane</keyword>
<keyword id="KW-1133">Transmembrane helix</keyword>
<keyword id="KW-0813">Transport</keyword>
<accession>A9N877</accession>
<name>MSRQ_SALPB</name>
<organism>
    <name type="scientific">Salmonella paratyphi B (strain ATCC BAA-1250 / SPB7)</name>
    <dbReference type="NCBI Taxonomy" id="1016998"/>
    <lineage>
        <taxon>Bacteria</taxon>
        <taxon>Pseudomonadati</taxon>
        <taxon>Pseudomonadota</taxon>
        <taxon>Gammaproteobacteria</taxon>
        <taxon>Enterobacterales</taxon>
        <taxon>Enterobacteriaceae</taxon>
        <taxon>Salmonella</taxon>
    </lineage>
</organism>
<sequence>MRLTAKQITWLKVCLHLAGFLPLLWLFWAINHGGLSADPVKDIQHFTGRTALKFLLATLLVSPLARYAKQPLLIRTRRLLGLWCFVWATLHLTSYALLELGIHNLALLGSELISRPYLTLGIISWLVLLALTLTSTQFAQRKLGKRWQTLHNVVYLVAILAPIHYLWSVKILSPQPVIYAALALALLALRYRKFRQWWR</sequence>
<protein>
    <recommendedName>
        <fullName evidence="1">Protein-methionine-sulfoxide reductase heme-binding subunit MsrQ</fullName>
    </recommendedName>
    <alternativeName>
        <fullName evidence="1">Flavocytochrome MsrQ</fullName>
    </alternativeName>
</protein>
<dbReference type="EMBL" id="CP000886">
    <property type="protein sequence ID" value="ABX69530.1"/>
    <property type="molecule type" value="Genomic_DNA"/>
</dbReference>
<dbReference type="RefSeq" id="WP_001240053.1">
    <property type="nucleotide sequence ID" value="NC_010102.1"/>
</dbReference>
<dbReference type="SMR" id="A9N877"/>
<dbReference type="KEGG" id="spq:SPAB_04207"/>
<dbReference type="PATRIC" id="fig|1016998.12.peg.3962"/>
<dbReference type="HOGENOM" id="CLU_080662_1_0_6"/>
<dbReference type="BioCyc" id="SENT1016998:SPAB_RS17120-MONOMER"/>
<dbReference type="Proteomes" id="UP000008556">
    <property type="component" value="Chromosome"/>
</dbReference>
<dbReference type="GO" id="GO:0005886">
    <property type="term" value="C:plasma membrane"/>
    <property type="evidence" value="ECO:0007669"/>
    <property type="project" value="UniProtKB-SubCell"/>
</dbReference>
<dbReference type="GO" id="GO:0009055">
    <property type="term" value="F:electron transfer activity"/>
    <property type="evidence" value="ECO:0007669"/>
    <property type="project" value="UniProtKB-UniRule"/>
</dbReference>
<dbReference type="GO" id="GO:0010181">
    <property type="term" value="F:FMN binding"/>
    <property type="evidence" value="ECO:0007669"/>
    <property type="project" value="UniProtKB-UniRule"/>
</dbReference>
<dbReference type="GO" id="GO:0020037">
    <property type="term" value="F:heme binding"/>
    <property type="evidence" value="ECO:0007669"/>
    <property type="project" value="UniProtKB-UniRule"/>
</dbReference>
<dbReference type="GO" id="GO:0046872">
    <property type="term" value="F:metal ion binding"/>
    <property type="evidence" value="ECO:0007669"/>
    <property type="project" value="UniProtKB-KW"/>
</dbReference>
<dbReference type="GO" id="GO:0016679">
    <property type="term" value="F:oxidoreductase activity, acting on diphenols and related substances as donors"/>
    <property type="evidence" value="ECO:0007669"/>
    <property type="project" value="TreeGrafter"/>
</dbReference>
<dbReference type="GO" id="GO:0030091">
    <property type="term" value="P:protein repair"/>
    <property type="evidence" value="ECO:0007669"/>
    <property type="project" value="UniProtKB-UniRule"/>
</dbReference>
<dbReference type="HAMAP" id="MF_01207">
    <property type="entry name" value="MsrQ"/>
    <property type="match status" value="1"/>
</dbReference>
<dbReference type="InterPro" id="IPR013130">
    <property type="entry name" value="Fe3_Rdtase_TM_dom"/>
</dbReference>
<dbReference type="InterPro" id="IPR022837">
    <property type="entry name" value="MsrQ-like"/>
</dbReference>
<dbReference type="NCBIfam" id="NF003831">
    <property type="entry name" value="PRK05419.1-2"/>
    <property type="match status" value="1"/>
</dbReference>
<dbReference type="NCBIfam" id="NF003832">
    <property type="entry name" value="PRK05419.1-4"/>
    <property type="match status" value="1"/>
</dbReference>
<dbReference type="PANTHER" id="PTHR36964">
    <property type="entry name" value="PROTEIN-METHIONINE-SULFOXIDE REDUCTASE HEME-BINDING SUBUNIT MSRQ"/>
    <property type="match status" value="1"/>
</dbReference>
<dbReference type="PANTHER" id="PTHR36964:SF1">
    <property type="entry name" value="PROTEIN-METHIONINE-SULFOXIDE REDUCTASE HEME-BINDING SUBUNIT MSRQ"/>
    <property type="match status" value="1"/>
</dbReference>
<dbReference type="Pfam" id="PF01794">
    <property type="entry name" value="Ferric_reduct"/>
    <property type="match status" value="1"/>
</dbReference>
<proteinExistence type="inferred from homology"/>
<evidence type="ECO:0000255" key="1">
    <source>
        <dbReference type="HAMAP-Rule" id="MF_01207"/>
    </source>
</evidence>
<comment type="function">
    <text evidence="1">Part of the MsrPQ system that repairs oxidized periplasmic proteins containing methionine sulfoxide residues (Met-O), using respiratory chain electrons. Thus protects these proteins from oxidative-stress damage caused by reactive species of oxygen and chlorine generated by the host defense mechanisms. MsrPQ is essential for the maintenance of envelope integrity under bleach stress, rescuing a wide series of structurally unrelated periplasmic proteins from methionine oxidation, including the primary periplasmic chaperone SurA and the lipoprotein Pal. MsrQ provides electrons for reduction to the reductase catalytic subunit MsrP, using the quinone pool of the respiratory chain.</text>
</comment>
<comment type="cofactor">
    <cofactor evidence="1">
        <name>FMN</name>
        <dbReference type="ChEBI" id="CHEBI:58210"/>
    </cofactor>
    <text evidence="1">Binds 1 FMN per subunit.</text>
</comment>
<comment type="cofactor">
    <cofactor evidence="1">
        <name>heme b</name>
        <dbReference type="ChEBI" id="CHEBI:60344"/>
    </cofactor>
    <text evidence="1">Binds 1 heme b (iron(II)-protoporphyrin IX) group per subunit.</text>
</comment>
<comment type="subunit">
    <text evidence="1">Heterodimer of a catalytic subunit (MsrP) and a heme-binding subunit (MsrQ).</text>
</comment>
<comment type="subcellular location">
    <subcellularLocation>
        <location evidence="1">Cell inner membrane</location>
        <topology evidence="1">Multi-pass membrane protein</topology>
    </subcellularLocation>
</comment>
<comment type="similarity">
    <text evidence="1">Belongs to the MsrQ family.</text>
</comment>
<reference key="1">
    <citation type="submission" date="2007-11" db="EMBL/GenBank/DDBJ databases">
        <authorList>
            <consortium name="The Salmonella enterica serovar Paratyphi B Genome Sequencing Project"/>
            <person name="McClelland M."/>
            <person name="Sanderson E.K."/>
            <person name="Porwollik S."/>
            <person name="Spieth J."/>
            <person name="Clifton W.S."/>
            <person name="Fulton R."/>
            <person name="Cordes M."/>
            <person name="Wollam A."/>
            <person name="Shah N."/>
            <person name="Pepin K."/>
            <person name="Bhonagiri V."/>
            <person name="Nash W."/>
            <person name="Johnson M."/>
            <person name="Thiruvilangam P."/>
            <person name="Wilson R."/>
        </authorList>
    </citation>
    <scope>NUCLEOTIDE SEQUENCE [LARGE SCALE GENOMIC DNA]</scope>
    <source>
        <strain>ATCC BAA-1250 / SPB7</strain>
    </source>
</reference>